<keyword id="KW-0017">Alkaloid metabolism</keyword>
<keyword id="KW-0274">FAD</keyword>
<keyword id="KW-0285">Flavoprotein</keyword>
<keyword id="KW-0325">Glycoprotein</keyword>
<keyword id="KW-0560">Oxidoreductase</keyword>
<keyword id="KW-0732">Signal</keyword>
<comment type="function">
    <text evidence="5 6 9">FAD-linked oxidoreductase; part of the gene cluster that mediates the biosynthesis of notoamide, a fungal indole alkaloid that belongs to a family of natural products containing a characteristic bicyclo[2.2.2]diazaoctane core (PubMed:20722388). The first step of notoamide biosynthesis involves coupling of L-proline and L-tryptophan by the bimodular NRPS notE, to produce cyclo-L-tryptophan-L-proline called brevianamide F (PubMed:20722388). The reverse prenyltransferase notF then acts as a deoxybrevianamide E synthase and converts brevianamide F to deoxybrevianamide E via reverse prenylation at C-2 of the indole ring leading to the bicyclo[2.2.2]diazaoctane core (PubMed:20722388). Deoxybrevianamide E is further hydroxylated at C-6 of the indole ring, likely catalyzed by the cytochrome P450 monooxygenase notG, to yield 6-hydroxy-deoxybrevianamide E (Probable). 6-hydroxy-deoxybrevianamide E is a specific substrate of the prenyltransferase notC for normal prenylation at C-7 to produce 6-hydroxy-7-prenyl-deoxybrevianamide, also called notoamide S (PubMed:20722388). As the proposed pivotal branching point in notoamide biosynthesis, notoamide S can be diverted to notoamide E through an oxidative pyran ring closure putatively catalyzed by either notH cytochrome P450 monooxygenase or the notD FAD-linked oxidoreductase (Probable). This step would be followed by an indole 2,3-epoxidation-initiated pinacol-like rearrangement catalyzed by the notB FAD-dependent monooxygenase leading to the formation of notoamide C and notoamide D (PubMed:22188465). On the other hand notoamide S is converted to notoamide T by notH (or notD), a bifunctional oxidase that also functions as the intramolecular Diels-Alderase responsible for generation of (+)-notoamide T (Probable). To generate antipodal (-)-notoaminide T, notH' (or notD') in Aspergillus versicolor is expected to catalyze a Diels-Alder reaction leading to the opposite stereochemistry (Probable). The remaining oxidoreductase notD (or notH) likely catalyzes the oxidative pyran ring formation to yield (+)-stephacidin A (Probable). The FAD-dependent monooxygenase notI is highly similar to notB and is predicted to catalyze a similar conversion from (+)-stephacidin A to (-)-notoamide B via the 2,3-epoxidation of (+)-stephacidin A followed by a pinacol-type rearrangement (Probable). Finally, it remains unclear which enzyme could be responsible for the final hydroxylation steps leading to notoamide A and sclerotiamide (Probable).</text>
</comment>
<comment type="cofactor">
    <cofactor evidence="8">
        <name>FAD</name>
        <dbReference type="ChEBI" id="CHEBI:57692"/>
    </cofactor>
</comment>
<comment type="pathway">
    <text evidence="9">Alkaloid biosynthesis.</text>
</comment>
<comment type="biotechnology">
    <text evidence="4">Notoamides have been shown to exhibit antitumoral activities (PubMed:17304611). Notoamides A-C show moderate cytotoxicity against HeLa and L1210 cells with IC(50) values in the range of 22-52 mg/ml, but the IC(50) value of notoamide D is greater than 100 mg/ml (PubMed:17304611). Moreover, notoamide C induces G2/M-cell cycle arrest at a concentration of 6.3 mg/ml (PubMed:17304611).</text>
</comment>
<comment type="similarity">
    <text evidence="8">Belongs to the oxygen-dependent FAD-linked oxidoreductase family.</text>
</comment>
<gene>
    <name evidence="7" type="primary">notD</name>
</gene>
<feature type="signal peptide" evidence="1">
    <location>
        <begin position="1"/>
        <end position="21"/>
    </location>
</feature>
<feature type="chain" id="PRO_5003143463" description="FAD-linked oxidoreductase notD">
    <location>
        <begin position="22"/>
        <end position="620"/>
    </location>
</feature>
<feature type="domain" description="FAD-binding PCMH-type" evidence="3">
    <location>
        <begin position="124"/>
        <end position="313"/>
    </location>
</feature>
<feature type="glycosylation site" description="N-linked (GlcNAc...) asparagine" evidence="2">
    <location>
        <position position="50"/>
    </location>
</feature>
<feature type="glycosylation site" description="N-linked (GlcNAc...) asparagine" evidence="2">
    <location>
        <position position="86"/>
    </location>
</feature>
<feature type="glycosylation site" description="N-linked (GlcNAc...) asparagine" evidence="2">
    <location>
        <position position="109"/>
    </location>
</feature>
<feature type="glycosylation site" description="N-linked (GlcNAc...) asparagine" evidence="2">
    <location>
        <position position="403"/>
    </location>
</feature>
<organism>
    <name type="scientific">Aspergillus sp. (strain MF297-2)</name>
    <dbReference type="NCBI Taxonomy" id="877550"/>
    <lineage>
        <taxon>Eukaryota</taxon>
        <taxon>Fungi</taxon>
        <taxon>Dikarya</taxon>
        <taxon>Ascomycota</taxon>
        <taxon>Pezizomycotina</taxon>
        <taxon>Eurotiomycetes</taxon>
        <taxon>Eurotiomycetidae</taxon>
        <taxon>Eurotiales</taxon>
        <taxon>Aspergillaceae</taxon>
        <taxon>Aspergillus</taxon>
    </lineage>
</organism>
<protein>
    <recommendedName>
        <fullName evidence="7">FAD-linked oxidoreductase notD</fullName>
        <ecNumber evidence="9">1.-.-.-</ecNumber>
    </recommendedName>
    <alternativeName>
        <fullName evidence="7">Notoamide biosynthesis cluster protein D</fullName>
    </alternativeName>
</protein>
<dbReference type="EC" id="1.-.-.-" evidence="9"/>
<dbReference type="EMBL" id="HM622670">
    <property type="protein sequence ID" value="ADM34137.1"/>
    <property type="molecule type" value="Genomic_DNA"/>
</dbReference>
<dbReference type="SMR" id="E1ACP9"/>
<dbReference type="GlyCosmos" id="E1ACP9">
    <property type="glycosylation" value="4 sites, No reported glycans"/>
</dbReference>
<dbReference type="GO" id="GO:0071949">
    <property type="term" value="F:FAD binding"/>
    <property type="evidence" value="ECO:0007669"/>
    <property type="project" value="InterPro"/>
</dbReference>
<dbReference type="GO" id="GO:0016491">
    <property type="term" value="F:oxidoreductase activity"/>
    <property type="evidence" value="ECO:0007669"/>
    <property type="project" value="UniProtKB-KW"/>
</dbReference>
<dbReference type="GO" id="GO:0009820">
    <property type="term" value="P:alkaloid metabolic process"/>
    <property type="evidence" value="ECO:0007669"/>
    <property type="project" value="UniProtKB-KW"/>
</dbReference>
<dbReference type="Gene3D" id="3.30.465.10">
    <property type="match status" value="2"/>
</dbReference>
<dbReference type="InterPro" id="IPR012951">
    <property type="entry name" value="BBE"/>
</dbReference>
<dbReference type="InterPro" id="IPR016166">
    <property type="entry name" value="FAD-bd_PCMH"/>
</dbReference>
<dbReference type="InterPro" id="IPR036318">
    <property type="entry name" value="FAD-bd_PCMH-like_sf"/>
</dbReference>
<dbReference type="InterPro" id="IPR016169">
    <property type="entry name" value="FAD-bd_PCMH_sub2"/>
</dbReference>
<dbReference type="InterPro" id="IPR050416">
    <property type="entry name" value="FAD-linked_Oxidoreductase"/>
</dbReference>
<dbReference type="InterPro" id="IPR006094">
    <property type="entry name" value="Oxid_FAD_bind_N"/>
</dbReference>
<dbReference type="PANTHER" id="PTHR42973">
    <property type="entry name" value="BINDING OXIDOREDUCTASE, PUTATIVE (AFU_ORTHOLOGUE AFUA_1G17690)-RELATED"/>
    <property type="match status" value="1"/>
</dbReference>
<dbReference type="PANTHER" id="PTHR42973:SF39">
    <property type="entry name" value="FAD-BINDING PCMH-TYPE DOMAIN-CONTAINING PROTEIN"/>
    <property type="match status" value="1"/>
</dbReference>
<dbReference type="Pfam" id="PF08031">
    <property type="entry name" value="BBE"/>
    <property type="match status" value="1"/>
</dbReference>
<dbReference type="Pfam" id="PF01565">
    <property type="entry name" value="FAD_binding_4"/>
    <property type="match status" value="1"/>
</dbReference>
<dbReference type="SUPFAM" id="SSF56176">
    <property type="entry name" value="FAD-binding/transporter-associated domain-like"/>
    <property type="match status" value="1"/>
</dbReference>
<dbReference type="PROSITE" id="PS51387">
    <property type="entry name" value="FAD_PCMH"/>
    <property type="match status" value="1"/>
</dbReference>
<sequence length="620" mass="67988">MHYIRELLIVVFTSCPALSYAHSSLDGSRYCRCQPGEACWPSLADWQALNSSIQGNLVEVRPIGHVCHEPTYNKAACERVSKLSSNGTWRANQPGAQQEYAWEVSLSRNESCYVGPDNPTEPCSQGRIPRYSAMVETTEQAQKAIMFARERQLRLVIKNTGHDSGGRSSAVDSFQILTQRLKDITFIPEFTPTLGLAEGTYKSKGPSVRIGAGVLTKELYAAADEHGYTVMGGECATVGIAGGYIQGGGVSTALTPMLGLAVDLVQEFEVITAEGRHVIANEFQNQDLFWALRGGGGGTFGLVTSVTMPVFGAMPAVISELTFESQEPGEPFWRAVKEVIYATRDLSTGGNSGQYWIGRGPTGSYFVRLTLFFIGEMDTGKMGGKVGSLLSALQDQEIGFHLNSTAYDRLSSFLAIPQGEFVGGIAFHQENILIPRGFYDSPEGPAELVNRLAEVKLNPGDMWVANALGGKVMANKDSVDNAMHPGWRTAAVLLVGNRIFEPVLEAQRAVQERMTAVEGPLLHSLGPPGPVAIYLNEADADLENWQEWFWGEKYNRLRDIKRKWDPDDLFLVRHGVGSEDWDEEGMCWIQMSIEECPVREPSQCTCPSFGCPMRHVPGLL</sequence>
<proteinExistence type="evidence at protein level"/>
<accession>E1ACP9</accession>
<evidence type="ECO:0000255" key="1"/>
<evidence type="ECO:0000255" key="2">
    <source>
        <dbReference type="PROSITE-ProRule" id="PRU00498"/>
    </source>
</evidence>
<evidence type="ECO:0000255" key="3">
    <source>
        <dbReference type="PROSITE-ProRule" id="PRU00718"/>
    </source>
</evidence>
<evidence type="ECO:0000269" key="4">
    <source>
    </source>
</evidence>
<evidence type="ECO:0000269" key="5">
    <source>
    </source>
</evidence>
<evidence type="ECO:0000269" key="6">
    <source>
    </source>
</evidence>
<evidence type="ECO:0000303" key="7">
    <source>
    </source>
</evidence>
<evidence type="ECO:0000305" key="8"/>
<evidence type="ECO:0000305" key="9">
    <source>
    </source>
</evidence>
<name>NOTD_ASPSM</name>
<reference key="1">
    <citation type="journal article" date="2010" name="J. Am. Chem. Soc.">
        <title>Genome-based characterization of two prenylation steps in the assembly of the stephacidin and notoamide anticancer agents in a marine-derived Aspergillus sp.</title>
        <authorList>
            <person name="Ding Y."/>
            <person name="de Wet J.R."/>
            <person name="Cavalcoli J."/>
            <person name="Li S."/>
            <person name="Greshock T.J."/>
            <person name="Miller K.A."/>
            <person name="Finefield J.M."/>
            <person name="Sunderhaus J.D."/>
            <person name="McAfoos T.J."/>
            <person name="Tsukamoto S."/>
            <person name="Williams R.M."/>
            <person name="Sherman D.H."/>
        </authorList>
    </citation>
    <scope>NUCLEOTIDE SEQUENCE [GENOMIC DNA]</scope>
    <scope>FUNCTION</scope>
    <source>
        <strain>MF297-2</strain>
    </source>
</reference>
<reference key="2">
    <citation type="journal article" date="2007" name="Angew. Chem. Int. Ed.">
        <title>Notoamides A-D: prenylated indole alkaloids isolated from a marine-derived fungus, Aspergillus sp.</title>
        <authorList>
            <person name="Kato H."/>
            <person name="Yoshida T."/>
            <person name="Tokue T."/>
            <person name="Nojiri Y."/>
            <person name="Hirota H."/>
            <person name="Ohta T."/>
            <person name="Williams R.M."/>
            <person name="Tsukamoto S."/>
        </authorList>
    </citation>
    <scope>BIOTECHNOLOGY</scope>
</reference>
<reference key="3">
    <citation type="journal article" date="2012" name="J. Am. Chem. Soc.">
        <title>Biochemical characterization of NotB as an FAD-dependent oxidase in the biosynthesis of notoamide indole alkaloids.</title>
        <authorList>
            <person name="Li S."/>
            <person name="Finefield J.M."/>
            <person name="Sunderhaus J.D."/>
            <person name="McAfoos T.J."/>
            <person name="Williams R.M."/>
            <person name="Sherman D.H."/>
        </authorList>
    </citation>
    <scope>FUNCTION</scope>
</reference>
<reference key="4">
    <citation type="journal article" date="2012" name="Med. Chem. Commun.">
        <title>Comparative analysis of the biosynthetic systems for fungal bicyclo[2.2.2]diazaoctane indole alkaloids: the (+)/(-)-notoamide, paraherquamide and malbrancheamide pathways.</title>
        <authorList>
            <person name="Li S."/>
            <person name="Anand K."/>
            <person name="Tran H."/>
            <person name="Yu F."/>
            <person name="Finefield J.M."/>
            <person name="Sunderhaus J.D."/>
            <person name="McAfoos T.J."/>
            <person name="Tsukamoto S."/>
            <person name="Williams R.M."/>
            <person name="Sherman D.H."/>
        </authorList>
    </citation>
    <scope>FUNCTION</scope>
</reference>